<comment type="function">
    <text evidence="1">Participates actively in the response to hyperosmotic and heat shock by preventing the aggregation of stress-denatured proteins and by disaggregating proteins, also in an autonomous, DnaK-independent fashion. Unfolded proteins bind initially to DnaJ; upon interaction with the DnaJ-bound protein, DnaK hydrolyzes its bound ATP, resulting in the formation of a stable complex. GrpE releases ADP from DnaK; ATP binding to DnaK triggers the release of the substrate protein, thus completing the reaction cycle. Several rounds of ATP-dependent interactions between DnaJ, DnaK and GrpE are required for fully efficient folding. Also involved, together with DnaK and GrpE, in the DNA replication of plasmids through activation of initiation proteins.</text>
</comment>
<comment type="cofactor">
    <cofactor evidence="1">
        <name>Zn(2+)</name>
        <dbReference type="ChEBI" id="CHEBI:29105"/>
    </cofactor>
    <text evidence="1">Binds 2 Zn(2+) ions per monomer.</text>
</comment>
<comment type="subunit">
    <text evidence="1">Homodimer.</text>
</comment>
<comment type="subcellular location">
    <subcellularLocation>
        <location evidence="1">Cytoplasm</location>
    </subcellularLocation>
</comment>
<comment type="domain">
    <text evidence="1">The J domain is necessary and sufficient to stimulate DnaK ATPase activity. Zinc center 1 plays an important role in the autonomous, DnaK-independent chaperone activity of DnaJ. Zinc center 2 is essential for interaction with DnaK and for DnaJ activity.</text>
</comment>
<comment type="similarity">
    <text evidence="1">Belongs to the DnaJ family.</text>
</comment>
<dbReference type="EMBL" id="CP001321">
    <property type="protein sequence ID" value="ACL33375.1"/>
    <property type="molecule type" value="Genomic_DNA"/>
</dbReference>
<dbReference type="RefSeq" id="WP_015939959.1">
    <property type="nucleotide sequence ID" value="NC_011852.1"/>
</dbReference>
<dbReference type="SMR" id="B8F7S3"/>
<dbReference type="STRING" id="557723.HAPS_1886"/>
<dbReference type="KEGG" id="hap:HAPS_1886"/>
<dbReference type="PATRIC" id="fig|557723.8.peg.1871"/>
<dbReference type="HOGENOM" id="CLU_017633_0_7_6"/>
<dbReference type="Proteomes" id="UP000006743">
    <property type="component" value="Chromosome"/>
</dbReference>
<dbReference type="GO" id="GO:0005737">
    <property type="term" value="C:cytoplasm"/>
    <property type="evidence" value="ECO:0007669"/>
    <property type="project" value="UniProtKB-SubCell"/>
</dbReference>
<dbReference type="GO" id="GO:0005524">
    <property type="term" value="F:ATP binding"/>
    <property type="evidence" value="ECO:0007669"/>
    <property type="project" value="InterPro"/>
</dbReference>
<dbReference type="GO" id="GO:0031072">
    <property type="term" value="F:heat shock protein binding"/>
    <property type="evidence" value="ECO:0007669"/>
    <property type="project" value="InterPro"/>
</dbReference>
<dbReference type="GO" id="GO:0051082">
    <property type="term" value="F:unfolded protein binding"/>
    <property type="evidence" value="ECO:0007669"/>
    <property type="project" value="UniProtKB-UniRule"/>
</dbReference>
<dbReference type="GO" id="GO:0008270">
    <property type="term" value="F:zinc ion binding"/>
    <property type="evidence" value="ECO:0007669"/>
    <property type="project" value="UniProtKB-UniRule"/>
</dbReference>
<dbReference type="GO" id="GO:0051085">
    <property type="term" value="P:chaperone cofactor-dependent protein refolding"/>
    <property type="evidence" value="ECO:0007669"/>
    <property type="project" value="TreeGrafter"/>
</dbReference>
<dbReference type="GO" id="GO:0006260">
    <property type="term" value="P:DNA replication"/>
    <property type="evidence" value="ECO:0007669"/>
    <property type="project" value="UniProtKB-KW"/>
</dbReference>
<dbReference type="GO" id="GO:0042026">
    <property type="term" value="P:protein refolding"/>
    <property type="evidence" value="ECO:0007669"/>
    <property type="project" value="TreeGrafter"/>
</dbReference>
<dbReference type="GO" id="GO:0009408">
    <property type="term" value="P:response to heat"/>
    <property type="evidence" value="ECO:0007669"/>
    <property type="project" value="InterPro"/>
</dbReference>
<dbReference type="CDD" id="cd06257">
    <property type="entry name" value="DnaJ"/>
    <property type="match status" value="1"/>
</dbReference>
<dbReference type="CDD" id="cd10747">
    <property type="entry name" value="DnaJ_C"/>
    <property type="match status" value="1"/>
</dbReference>
<dbReference type="CDD" id="cd10719">
    <property type="entry name" value="DnaJ_zf"/>
    <property type="match status" value="1"/>
</dbReference>
<dbReference type="FunFam" id="1.10.287.110:FF:000031">
    <property type="entry name" value="Molecular chaperone DnaJ"/>
    <property type="match status" value="1"/>
</dbReference>
<dbReference type="FunFam" id="2.10.230.10:FF:000002">
    <property type="entry name" value="Molecular chaperone DnaJ"/>
    <property type="match status" value="1"/>
</dbReference>
<dbReference type="FunFam" id="2.60.260.20:FF:000004">
    <property type="entry name" value="Molecular chaperone DnaJ"/>
    <property type="match status" value="1"/>
</dbReference>
<dbReference type="Gene3D" id="1.10.287.110">
    <property type="entry name" value="DnaJ domain"/>
    <property type="match status" value="1"/>
</dbReference>
<dbReference type="Gene3D" id="2.10.230.10">
    <property type="entry name" value="Heat shock protein DnaJ, cysteine-rich domain"/>
    <property type="match status" value="1"/>
</dbReference>
<dbReference type="Gene3D" id="2.60.260.20">
    <property type="entry name" value="Urease metallochaperone UreE, N-terminal domain"/>
    <property type="match status" value="2"/>
</dbReference>
<dbReference type="HAMAP" id="MF_01152">
    <property type="entry name" value="DnaJ"/>
    <property type="match status" value="1"/>
</dbReference>
<dbReference type="InterPro" id="IPR012724">
    <property type="entry name" value="DnaJ"/>
</dbReference>
<dbReference type="InterPro" id="IPR002939">
    <property type="entry name" value="DnaJ_C"/>
</dbReference>
<dbReference type="InterPro" id="IPR001623">
    <property type="entry name" value="DnaJ_domain"/>
</dbReference>
<dbReference type="InterPro" id="IPR018253">
    <property type="entry name" value="DnaJ_domain_CS"/>
</dbReference>
<dbReference type="InterPro" id="IPR008971">
    <property type="entry name" value="HSP40/DnaJ_pept-bd"/>
</dbReference>
<dbReference type="InterPro" id="IPR001305">
    <property type="entry name" value="HSP_DnaJ_Cys-rich_dom"/>
</dbReference>
<dbReference type="InterPro" id="IPR036410">
    <property type="entry name" value="HSP_DnaJ_Cys-rich_dom_sf"/>
</dbReference>
<dbReference type="InterPro" id="IPR036869">
    <property type="entry name" value="J_dom_sf"/>
</dbReference>
<dbReference type="NCBIfam" id="TIGR02349">
    <property type="entry name" value="DnaJ_bact"/>
    <property type="match status" value="1"/>
</dbReference>
<dbReference type="NCBIfam" id="NF008035">
    <property type="entry name" value="PRK10767.1"/>
    <property type="match status" value="1"/>
</dbReference>
<dbReference type="PANTHER" id="PTHR43096:SF48">
    <property type="entry name" value="CHAPERONE PROTEIN DNAJ"/>
    <property type="match status" value="1"/>
</dbReference>
<dbReference type="PANTHER" id="PTHR43096">
    <property type="entry name" value="DNAJ HOMOLOG 1, MITOCHONDRIAL-RELATED"/>
    <property type="match status" value="1"/>
</dbReference>
<dbReference type="Pfam" id="PF00226">
    <property type="entry name" value="DnaJ"/>
    <property type="match status" value="1"/>
</dbReference>
<dbReference type="Pfam" id="PF01556">
    <property type="entry name" value="DnaJ_C"/>
    <property type="match status" value="1"/>
</dbReference>
<dbReference type="Pfam" id="PF00684">
    <property type="entry name" value="DnaJ_CXXCXGXG"/>
    <property type="match status" value="1"/>
</dbReference>
<dbReference type="PRINTS" id="PR00625">
    <property type="entry name" value="JDOMAIN"/>
</dbReference>
<dbReference type="SMART" id="SM00271">
    <property type="entry name" value="DnaJ"/>
    <property type="match status" value="1"/>
</dbReference>
<dbReference type="SUPFAM" id="SSF46565">
    <property type="entry name" value="Chaperone J-domain"/>
    <property type="match status" value="1"/>
</dbReference>
<dbReference type="SUPFAM" id="SSF57938">
    <property type="entry name" value="DnaJ/Hsp40 cysteine-rich domain"/>
    <property type="match status" value="1"/>
</dbReference>
<dbReference type="SUPFAM" id="SSF49493">
    <property type="entry name" value="HSP40/DnaJ peptide-binding domain"/>
    <property type="match status" value="2"/>
</dbReference>
<dbReference type="PROSITE" id="PS00636">
    <property type="entry name" value="DNAJ_1"/>
    <property type="match status" value="1"/>
</dbReference>
<dbReference type="PROSITE" id="PS50076">
    <property type="entry name" value="DNAJ_2"/>
    <property type="match status" value="1"/>
</dbReference>
<dbReference type="PROSITE" id="PS51188">
    <property type="entry name" value="ZF_CR"/>
    <property type="match status" value="1"/>
</dbReference>
<keyword id="KW-0143">Chaperone</keyword>
<keyword id="KW-0963">Cytoplasm</keyword>
<keyword id="KW-0235">DNA replication</keyword>
<keyword id="KW-0479">Metal-binding</keyword>
<keyword id="KW-1185">Reference proteome</keyword>
<keyword id="KW-0677">Repeat</keyword>
<keyword id="KW-0346">Stress response</keyword>
<keyword id="KW-0862">Zinc</keyword>
<keyword id="KW-0863">Zinc-finger</keyword>
<accession>B8F7S3</accession>
<proteinExistence type="inferred from homology"/>
<feature type="chain" id="PRO_1000164263" description="Chaperone protein DnaJ">
    <location>
        <begin position="1"/>
        <end position="378"/>
    </location>
</feature>
<feature type="domain" description="J" evidence="1">
    <location>
        <begin position="5"/>
        <end position="70"/>
    </location>
</feature>
<feature type="repeat" description="CXXCXGXG motif">
    <location>
        <begin position="148"/>
        <end position="155"/>
    </location>
</feature>
<feature type="repeat" description="CXXCXGXG motif">
    <location>
        <begin position="165"/>
        <end position="172"/>
    </location>
</feature>
<feature type="repeat" description="CXXCXGXG motif">
    <location>
        <begin position="187"/>
        <end position="194"/>
    </location>
</feature>
<feature type="repeat" description="CXXCXGXG motif">
    <location>
        <begin position="201"/>
        <end position="208"/>
    </location>
</feature>
<feature type="zinc finger region" description="CR-type" evidence="1">
    <location>
        <begin position="135"/>
        <end position="213"/>
    </location>
</feature>
<feature type="binding site" evidence="1">
    <location>
        <position position="148"/>
    </location>
    <ligand>
        <name>Zn(2+)</name>
        <dbReference type="ChEBI" id="CHEBI:29105"/>
        <label>1</label>
    </ligand>
</feature>
<feature type="binding site" evidence="1">
    <location>
        <position position="151"/>
    </location>
    <ligand>
        <name>Zn(2+)</name>
        <dbReference type="ChEBI" id="CHEBI:29105"/>
        <label>1</label>
    </ligand>
</feature>
<feature type="binding site" evidence="1">
    <location>
        <position position="165"/>
    </location>
    <ligand>
        <name>Zn(2+)</name>
        <dbReference type="ChEBI" id="CHEBI:29105"/>
        <label>2</label>
    </ligand>
</feature>
<feature type="binding site" evidence="1">
    <location>
        <position position="168"/>
    </location>
    <ligand>
        <name>Zn(2+)</name>
        <dbReference type="ChEBI" id="CHEBI:29105"/>
        <label>2</label>
    </ligand>
</feature>
<feature type="binding site" evidence="1">
    <location>
        <position position="187"/>
    </location>
    <ligand>
        <name>Zn(2+)</name>
        <dbReference type="ChEBI" id="CHEBI:29105"/>
        <label>2</label>
    </ligand>
</feature>
<feature type="binding site" evidence="1">
    <location>
        <position position="190"/>
    </location>
    <ligand>
        <name>Zn(2+)</name>
        <dbReference type="ChEBI" id="CHEBI:29105"/>
        <label>2</label>
    </ligand>
</feature>
<feature type="binding site" evidence="1">
    <location>
        <position position="201"/>
    </location>
    <ligand>
        <name>Zn(2+)</name>
        <dbReference type="ChEBI" id="CHEBI:29105"/>
        <label>1</label>
    </ligand>
</feature>
<feature type="binding site" evidence="1">
    <location>
        <position position="204"/>
    </location>
    <ligand>
        <name>Zn(2+)</name>
        <dbReference type="ChEBI" id="CHEBI:29105"/>
        <label>1</label>
    </ligand>
</feature>
<evidence type="ECO:0000255" key="1">
    <source>
        <dbReference type="HAMAP-Rule" id="MF_01152"/>
    </source>
</evidence>
<name>DNAJ_GLAP5</name>
<gene>
    <name evidence="1" type="primary">dnaJ</name>
    <name type="ordered locus">HAPS_1886</name>
</gene>
<protein>
    <recommendedName>
        <fullName evidence="1">Chaperone protein DnaJ</fullName>
    </recommendedName>
</protein>
<reference key="1">
    <citation type="journal article" date="2009" name="J. Bacteriol.">
        <title>Complete genome sequence of Haemophilus parasuis SH0165.</title>
        <authorList>
            <person name="Yue M."/>
            <person name="Yang F."/>
            <person name="Yang J."/>
            <person name="Bei W."/>
            <person name="Cai X."/>
            <person name="Chen L."/>
            <person name="Dong J."/>
            <person name="Zhou R."/>
            <person name="Jin M."/>
            <person name="Jin Q."/>
            <person name="Chen H."/>
        </authorList>
    </citation>
    <scope>NUCLEOTIDE SEQUENCE [LARGE SCALE GENOMIC DNA]</scope>
    <source>
        <strain>SH0165</strain>
    </source>
</reference>
<sequence>MSKKDYYEVLGLQKGASEQEIKRAYKRLAAKHHPDKNQGSKEAEEKFKEIKEAYEVLGDNEKRAMYDQYGHQAFEHGGGAGGFGGFGGGGFGGFEDIFSEMFGGGFGGGARRQRVVRGDDLRYDLEITLEEAVRGVKKDIRIRTLVQCDTCHGSGAEAGSKVETCPHCHGSGRVRRQQGFFMTETVCPSCHGTGKKIDKPCKSCHGDGRVEKTKNLSVTIPAGVDTGNQLRLSGEGAAGENGAPAGDLYVVIHVKDHDIFVRDGSNLYCEVPISFTMAALGGEIEVPTLDGRVKLKIPAETQTGKLFRVRGKGVTSARGGYAGDLICKVIIETPVSLNEEQKELLRKLEESLEGKGQHRPKHEGFFKGVKNFFDNLSK</sequence>
<organism>
    <name type="scientific">Glaesserella parasuis serovar 5 (strain SH0165)</name>
    <name type="common">Haemophilus parasuis</name>
    <dbReference type="NCBI Taxonomy" id="557723"/>
    <lineage>
        <taxon>Bacteria</taxon>
        <taxon>Pseudomonadati</taxon>
        <taxon>Pseudomonadota</taxon>
        <taxon>Gammaproteobacteria</taxon>
        <taxon>Pasteurellales</taxon>
        <taxon>Pasteurellaceae</taxon>
        <taxon>Glaesserella</taxon>
    </lineage>
</organism>